<reference key="1">
    <citation type="journal article" date="1999" name="Science">
        <title>Genome sequence of the radioresistant bacterium Deinococcus radiodurans R1.</title>
        <authorList>
            <person name="White O."/>
            <person name="Eisen J.A."/>
            <person name="Heidelberg J.F."/>
            <person name="Hickey E.K."/>
            <person name="Peterson J.D."/>
            <person name="Dodson R.J."/>
            <person name="Haft D.H."/>
            <person name="Gwinn M.L."/>
            <person name="Nelson W.C."/>
            <person name="Richardson D.L."/>
            <person name="Moffat K.S."/>
            <person name="Qin H."/>
            <person name="Jiang L."/>
            <person name="Pamphile W."/>
            <person name="Crosby M."/>
            <person name="Shen M."/>
            <person name="Vamathevan J.J."/>
            <person name="Lam P."/>
            <person name="McDonald L.A."/>
            <person name="Utterback T.R."/>
            <person name="Zalewski C."/>
            <person name="Makarova K.S."/>
            <person name="Aravind L."/>
            <person name="Daly M.J."/>
            <person name="Minton K.W."/>
            <person name="Fleischmann R.D."/>
            <person name="Ketchum K.A."/>
            <person name="Nelson K.E."/>
            <person name="Salzberg S.L."/>
            <person name="Smith H.O."/>
            <person name="Venter J.C."/>
            <person name="Fraser C.M."/>
        </authorList>
    </citation>
    <scope>NUCLEOTIDE SEQUENCE [LARGE SCALE GENOMIC DNA]</scope>
    <source>
        <strain>ATCC 13939 / DSM 20539 / JCM 16871 / CCUG 27074 / LMG 4051 / NBRC 15346 / NCIMB 9279 / VKM B-1422 / R1</strain>
    </source>
</reference>
<reference key="2">
    <citation type="journal article" date="2001" name="Cell">
        <title>High resolution structure of the large ribosomal subunit from a mesophilic eubacterium.</title>
        <authorList>
            <person name="Harms J."/>
            <person name="Schluenzen F."/>
            <person name="Zarivach R."/>
            <person name="Bashan A."/>
            <person name="Gat S."/>
            <person name="Agmon I."/>
            <person name="Bartels H."/>
            <person name="Franceschi F."/>
            <person name="Yonath A."/>
        </authorList>
    </citation>
    <scope>STRUCTURE OF THE 50S SUBUNIT</scope>
    <source>
        <strain>ATCC 13939 / DSM 20539 / JCM 16871 / CCUG 27074 / LMG 4051 / NBRC 15346 / NCIMB 9279 / VKM B-1422 / R1</strain>
    </source>
</reference>
<feature type="chain" id="PRO_0000157526" description="Large ribosomal subunit protein bL12">
    <location>
        <begin position="1"/>
        <end position="122"/>
    </location>
</feature>
<proteinExistence type="evidence at protein level"/>
<name>RL7_DEIRA</name>
<protein>
    <recommendedName>
        <fullName evidence="1">Large ribosomal subunit protein bL12</fullName>
    </recommendedName>
    <alternativeName>
        <fullName evidence="2">50S ribosomal protein L7/L12</fullName>
    </alternativeName>
</protein>
<evidence type="ECO:0000255" key="1">
    <source>
        <dbReference type="HAMAP-Rule" id="MF_00368"/>
    </source>
</evidence>
<evidence type="ECO:0000305" key="2"/>
<comment type="function">
    <text evidence="2">Forms part of the ribosomal stalk which helps the ribosome interact with GTP-bound translation factors. Is thus essential for accurate translation (Probable).</text>
</comment>
<comment type="subunit">
    <text evidence="2">Homodimer. Part of the ribosomal stalk of the 50S ribosomal subunit. Forms a multimeric L10(L12)X complex, where L10 forms an elongated spine to which 2 to 4 L12 dimers bind in a sequential fashion. Binds GTP-bound translation factors (Probable).</text>
</comment>
<comment type="similarity">
    <text evidence="1">Belongs to the bacterial ribosomal protein bL12 family.</text>
</comment>
<organism>
    <name type="scientific">Deinococcus radiodurans (strain ATCC 13939 / DSM 20539 / JCM 16871 / CCUG 27074 / LMG 4051 / NBRC 15346 / NCIMB 9279 / VKM B-1422 / R1)</name>
    <dbReference type="NCBI Taxonomy" id="243230"/>
    <lineage>
        <taxon>Bacteria</taxon>
        <taxon>Thermotogati</taxon>
        <taxon>Deinococcota</taxon>
        <taxon>Deinococci</taxon>
        <taxon>Deinococcales</taxon>
        <taxon>Deinococcaceae</taxon>
        <taxon>Deinococcus</taxon>
    </lineage>
</organism>
<keyword id="KW-0002">3D-structure</keyword>
<keyword id="KW-1185">Reference proteome</keyword>
<keyword id="KW-0687">Ribonucleoprotein</keyword>
<keyword id="KW-0689">Ribosomal protein</keyword>
<dbReference type="EMBL" id="AE000513">
    <property type="protein sequence ID" value="AAF11590.1"/>
    <property type="molecule type" value="Genomic_DNA"/>
</dbReference>
<dbReference type="PIR" id="D75323">
    <property type="entry name" value="D75323"/>
</dbReference>
<dbReference type="RefSeq" id="NP_295766.1">
    <property type="nucleotide sequence ID" value="NC_001263.1"/>
</dbReference>
<dbReference type="RefSeq" id="WP_010888675.1">
    <property type="nucleotide sequence ID" value="NC_001263.1"/>
</dbReference>
<dbReference type="PDB" id="2ZJQ">
    <property type="method" value="X-ray"/>
    <property type="resolution" value="3.30 A"/>
    <property type="chains" value="5=1-122"/>
</dbReference>
<dbReference type="PDBsum" id="2ZJQ"/>
<dbReference type="SMR" id="Q9RST0"/>
<dbReference type="FunCoup" id="Q9RST0">
    <property type="interactions" value="447"/>
</dbReference>
<dbReference type="STRING" id="243230.DR_2043"/>
<dbReference type="PaxDb" id="243230-DR_2043"/>
<dbReference type="EnsemblBacteria" id="AAF11590">
    <property type="protein sequence ID" value="AAF11590"/>
    <property type="gene ID" value="DR_2043"/>
</dbReference>
<dbReference type="GeneID" id="69518282"/>
<dbReference type="KEGG" id="dra:DR_2043"/>
<dbReference type="PATRIC" id="fig|243230.17.peg.2270"/>
<dbReference type="eggNOG" id="COG0222">
    <property type="taxonomic scope" value="Bacteria"/>
</dbReference>
<dbReference type="HOGENOM" id="CLU_086499_3_0_0"/>
<dbReference type="InParanoid" id="Q9RST0"/>
<dbReference type="OrthoDB" id="9811748at2"/>
<dbReference type="EvolutionaryTrace" id="Q9RST0"/>
<dbReference type="Proteomes" id="UP000002524">
    <property type="component" value="Chromosome 1"/>
</dbReference>
<dbReference type="GO" id="GO:0022625">
    <property type="term" value="C:cytosolic large ribosomal subunit"/>
    <property type="evidence" value="ECO:0000318"/>
    <property type="project" value="GO_Central"/>
</dbReference>
<dbReference type="GO" id="GO:0003729">
    <property type="term" value="F:mRNA binding"/>
    <property type="evidence" value="ECO:0000318"/>
    <property type="project" value="GO_Central"/>
</dbReference>
<dbReference type="GO" id="GO:0003735">
    <property type="term" value="F:structural constituent of ribosome"/>
    <property type="evidence" value="ECO:0000318"/>
    <property type="project" value="GO_Central"/>
</dbReference>
<dbReference type="GO" id="GO:0006412">
    <property type="term" value="P:translation"/>
    <property type="evidence" value="ECO:0000318"/>
    <property type="project" value="GO_Central"/>
</dbReference>
<dbReference type="CDD" id="cd00387">
    <property type="entry name" value="Ribosomal_L7_L12"/>
    <property type="match status" value="1"/>
</dbReference>
<dbReference type="FunFam" id="3.30.1390.10:FF:000001">
    <property type="entry name" value="50S ribosomal protein L7/L12"/>
    <property type="match status" value="1"/>
</dbReference>
<dbReference type="Gene3D" id="3.30.1390.10">
    <property type="match status" value="1"/>
</dbReference>
<dbReference type="Gene3D" id="1.20.5.710">
    <property type="entry name" value="Single helix bin"/>
    <property type="match status" value="1"/>
</dbReference>
<dbReference type="HAMAP" id="MF_00368">
    <property type="entry name" value="Ribosomal_bL12"/>
    <property type="match status" value="1"/>
</dbReference>
<dbReference type="InterPro" id="IPR000206">
    <property type="entry name" value="Ribosomal_bL12"/>
</dbReference>
<dbReference type="InterPro" id="IPR013823">
    <property type="entry name" value="Ribosomal_bL12_C"/>
</dbReference>
<dbReference type="InterPro" id="IPR014719">
    <property type="entry name" value="Ribosomal_bL12_C/ClpS-like"/>
</dbReference>
<dbReference type="InterPro" id="IPR008932">
    <property type="entry name" value="Ribosomal_bL12_oligo"/>
</dbReference>
<dbReference type="InterPro" id="IPR036235">
    <property type="entry name" value="Ribosomal_bL12_oligo_N_sf"/>
</dbReference>
<dbReference type="NCBIfam" id="TIGR00855">
    <property type="entry name" value="L12"/>
    <property type="match status" value="1"/>
</dbReference>
<dbReference type="PANTHER" id="PTHR45987">
    <property type="entry name" value="39S RIBOSOMAL PROTEIN L12"/>
    <property type="match status" value="1"/>
</dbReference>
<dbReference type="PANTHER" id="PTHR45987:SF4">
    <property type="entry name" value="LARGE RIBOSOMAL SUBUNIT PROTEIN BL12M"/>
    <property type="match status" value="1"/>
</dbReference>
<dbReference type="Pfam" id="PF00542">
    <property type="entry name" value="Ribosomal_L12"/>
    <property type="match status" value="1"/>
</dbReference>
<dbReference type="Pfam" id="PF16320">
    <property type="entry name" value="Ribosomal_L12_N"/>
    <property type="match status" value="1"/>
</dbReference>
<dbReference type="SUPFAM" id="SSF54736">
    <property type="entry name" value="ClpS-like"/>
    <property type="match status" value="1"/>
</dbReference>
<dbReference type="SUPFAM" id="SSF48300">
    <property type="entry name" value="Ribosomal protein L7/12, oligomerisation (N-terminal) domain"/>
    <property type="match status" value="1"/>
</dbReference>
<sequence length="122" mass="12628">MAYDKQALIDQLGQLTIMELADLIDGLKETWGVTAAVAVSGGGAGAASPAAEEKTEFDVVLIDAGASKINVIKEIRGITGLGLKEAKDMSEKGGVLKEGVAKDEAEKMKAQLEAAGARVELK</sequence>
<accession>Q9RST0</accession>
<gene>
    <name evidence="1" type="primary">rplL</name>
    <name type="ordered locus">DR_2043</name>
</gene>